<keyword id="KW-0002">3D-structure</keyword>
<keyword id="KW-1015">Disulfide bond</keyword>
<keyword id="KW-0281">Fimbrium</keyword>
<keyword id="KW-0964">Secreted</keyword>
<keyword id="KW-0732">Signal</keyword>
<organism>
    <name type="scientific">Escherichia coli</name>
    <dbReference type="NCBI Taxonomy" id="562"/>
    <lineage>
        <taxon>Bacteria</taxon>
        <taxon>Pseudomonadati</taxon>
        <taxon>Pseudomonadota</taxon>
        <taxon>Gammaproteobacteria</taxon>
        <taxon>Enterobacterales</taxon>
        <taxon>Enterobacteriaceae</taxon>
        <taxon>Escherichia</taxon>
    </lineage>
</organism>
<comment type="function">
    <text>Fimbriae (also called pili), polar filaments radiating from the surface of the bacterium to a length of 0.5-1.5 micrometers and numbering 100-300 per cell, enable bacteria to colonize the epithelium of specific host organs.</text>
</comment>
<comment type="function">
    <text>PapH seems to anchor the pilus to the bacterial cell. In addition the stoichiometric relationship between PapH and PapA determines the pilus length.</text>
</comment>
<comment type="subcellular location">
    <subcellularLocation>
        <location>Secreted</location>
    </subcellularLocation>
    <subcellularLocation>
        <location>Fimbrium</location>
    </subcellularLocation>
</comment>
<comment type="miscellaneous">
    <text>Strains of E.coli that cause infection of the human urinary tract produce pap-pili which are hair-like appendages consisting of about 1000 helically arranged subunits of the protein PapA. These pili mediate binding to digalactoside-containing glycolipids present on the epithelial cells which line the urinary tract.</text>
</comment>
<comment type="similarity">
    <text evidence="2">Belongs to the fimbrial protein family.</text>
</comment>
<sequence>MRLRFSVPLFFFGCVFVHGVFAGPFPPPGMSLPEYWGEEHVWWDGRAAFHGEVVRPACTLAMEDAWQIIDMGETPVRDLQNGFSGPERKFSLRLRNCEFNSQGGNLFSDSRIRVTFDGVRGETPDKFNLSGQAKGINLQIADVRGNIARAGKVMPAIPLTGNEEALDYTLRIVRNGKKLEAGNYFAVLGFRVDYE</sequence>
<evidence type="ECO:0000269" key="1">
    <source>
    </source>
</evidence>
<evidence type="ECO:0000305" key="2"/>
<evidence type="ECO:0007829" key="3">
    <source>
        <dbReference type="PDB" id="2J2Z"/>
    </source>
</evidence>
<evidence type="ECO:0007829" key="4">
    <source>
        <dbReference type="PDB" id="2XG5"/>
    </source>
</evidence>
<name>PAPH_ECOLX</name>
<feature type="signal peptide">
    <location>
        <begin position="1"/>
        <end position="22"/>
    </location>
</feature>
<feature type="chain" id="PRO_0000009198" description="PAP fimbrial minor pilin protein">
    <location>
        <begin position="23"/>
        <end position="195"/>
    </location>
</feature>
<feature type="disulfide bond" evidence="1">
    <location>
        <begin position="58"/>
        <end position="97"/>
    </location>
</feature>
<feature type="strand" evidence="4">
    <location>
        <begin position="59"/>
        <end position="61"/>
    </location>
</feature>
<feature type="strand" evidence="4">
    <location>
        <begin position="68"/>
        <end position="70"/>
    </location>
</feature>
<feature type="helix" evidence="4">
    <location>
        <begin position="76"/>
        <end position="80"/>
    </location>
</feature>
<feature type="strand" evidence="4">
    <location>
        <begin position="88"/>
        <end position="97"/>
    </location>
</feature>
<feature type="turn" evidence="4">
    <location>
        <begin position="106"/>
        <end position="110"/>
    </location>
</feature>
<feature type="strand" evidence="4">
    <location>
        <begin position="111"/>
        <end position="118"/>
    </location>
</feature>
<feature type="strand" evidence="3">
    <location>
        <begin position="130"/>
        <end position="132"/>
    </location>
</feature>
<feature type="strand" evidence="4">
    <location>
        <begin position="134"/>
        <end position="142"/>
    </location>
</feature>
<feature type="strand" evidence="4">
    <location>
        <begin position="165"/>
        <end position="174"/>
    </location>
</feature>
<feature type="strand" evidence="4">
    <location>
        <begin position="187"/>
        <end position="194"/>
    </location>
</feature>
<dbReference type="EMBL" id="Y00529">
    <property type="protein sequence ID" value="CAA68587.1"/>
    <property type="molecule type" value="Genomic_DNA"/>
</dbReference>
<dbReference type="EMBL" id="M16202">
    <property type="protein sequence ID" value="AAA24286.1"/>
    <property type="molecule type" value="Genomic_DNA"/>
</dbReference>
<dbReference type="EMBL" id="X61239">
    <property type="protein sequence ID" value="CAA43563.1"/>
    <property type="molecule type" value="Genomic_DNA"/>
</dbReference>
<dbReference type="PIR" id="A27021">
    <property type="entry name" value="YQECPH"/>
</dbReference>
<dbReference type="RefSeq" id="WP_001239368.1">
    <property type="nucleotide sequence ID" value="NZ_VOHF01000048.1"/>
</dbReference>
<dbReference type="PDB" id="2J2Z">
    <property type="method" value="X-ray"/>
    <property type="resolution" value="2.30 A"/>
    <property type="chains" value="B=23-195"/>
</dbReference>
<dbReference type="PDB" id="2XG4">
    <property type="method" value="X-ray"/>
    <property type="resolution" value="2.40 A"/>
    <property type="chains" value="B=23-195"/>
</dbReference>
<dbReference type="PDB" id="2XG5">
    <property type="method" value="X-ray"/>
    <property type="resolution" value="2.00 A"/>
    <property type="chains" value="B=23-195"/>
</dbReference>
<dbReference type="PDBsum" id="2J2Z"/>
<dbReference type="PDBsum" id="2XG4"/>
<dbReference type="PDBsum" id="2XG5"/>
<dbReference type="SMR" id="P07111"/>
<dbReference type="DIP" id="DIP-44596N"/>
<dbReference type="IntAct" id="P07111">
    <property type="interactions" value="3"/>
</dbReference>
<dbReference type="MINT" id="P07111"/>
<dbReference type="EvolutionaryTrace" id="P07111"/>
<dbReference type="GO" id="GO:0005576">
    <property type="term" value="C:extracellular region"/>
    <property type="evidence" value="ECO:0007669"/>
    <property type="project" value="UniProtKB-SubCell"/>
</dbReference>
<dbReference type="GO" id="GO:0009289">
    <property type="term" value="C:pilus"/>
    <property type="evidence" value="ECO:0007669"/>
    <property type="project" value="UniProtKB-SubCell"/>
</dbReference>
<dbReference type="GO" id="GO:0043709">
    <property type="term" value="P:cell adhesion involved in single-species biofilm formation"/>
    <property type="evidence" value="ECO:0007669"/>
    <property type="project" value="TreeGrafter"/>
</dbReference>
<dbReference type="Gene3D" id="2.60.40.1090">
    <property type="entry name" value="Fimbrial-type adhesion domain"/>
    <property type="match status" value="1"/>
</dbReference>
<dbReference type="InterPro" id="IPR036937">
    <property type="entry name" value="Adhesion_dom_fimbrial_sf"/>
</dbReference>
<dbReference type="InterPro" id="IPR008966">
    <property type="entry name" value="Adhesion_dom_sf"/>
</dbReference>
<dbReference type="InterPro" id="IPR050263">
    <property type="entry name" value="Bact_Fimbrial_Adh_Pro"/>
</dbReference>
<dbReference type="PANTHER" id="PTHR33420:SF26">
    <property type="entry name" value="FIMBRIAL SUBUNIT"/>
    <property type="match status" value="1"/>
</dbReference>
<dbReference type="PANTHER" id="PTHR33420">
    <property type="entry name" value="FIMBRIAL SUBUNIT ELFA-RELATED"/>
    <property type="match status" value="1"/>
</dbReference>
<dbReference type="SUPFAM" id="SSF49401">
    <property type="entry name" value="Bacterial adhesins"/>
    <property type="match status" value="1"/>
</dbReference>
<reference key="1">
    <citation type="journal article" date="1987" name="Cell">
        <title>Biogenesis of E. coli Pap pili: papH, a minor pilin subunit involved in cell anchoring and length modulation.</title>
        <authorList>
            <person name="Baga M."/>
            <person name="Norgren M."/>
            <person name="Normark S."/>
        </authorList>
    </citation>
    <scope>NUCLEOTIDE SEQUENCE [GENOMIC DNA]</scope>
    <source>
        <strain>ATCC 700336 / J96 / UPEC</strain>
    </source>
</reference>
<reference key="2">
    <citation type="journal article" date="1992" name="Mol. Microbiol.">
        <title>Horizontal gene transfer of the Escherichia coli pap and prs pili operons as a mechanism for the development of tissue-specific adhesive properties.</title>
        <authorList>
            <person name="Marklund B.-I."/>
            <person name="Tennent J.M."/>
            <person name="Garcia E."/>
            <person name="Hamers A."/>
            <person name="Baga M."/>
            <person name="Lindberg F."/>
            <person name="Gaastra W."/>
            <person name="Normark S."/>
        </authorList>
    </citation>
    <scope>NUCLEOTIDE SEQUENCE [GENOMIC DNA]</scope>
    <source>
        <strain>ATCC 700336 / J96 / UPEC</strain>
    </source>
</reference>
<reference key="3">
    <citation type="journal article" date="1987" name="Mol. Microbiol.">
        <title>Nucleotide sequence, regulation and functional analysis of the papC gene required for cell surface localization of Pap pili of uropathogenic Escherichia coli.</title>
        <authorList>
            <person name="Norgren M."/>
            <person name="Baga M."/>
            <person name="Tennent J.M."/>
            <person name="Normark S."/>
        </authorList>
    </citation>
    <scope>NUCLEOTIDE SEQUENCE [GENOMIC DNA] OF 149-195</scope>
    <source>
        <strain>ATCC 700336 / J96 / UPEC</strain>
    </source>
</reference>
<reference key="4">
    <citation type="journal article" date="2006" name="EMBO Rep.">
        <title>Molecular mechanism of P pilus termination in uropathogenic Escherichia coli.</title>
        <authorList>
            <person name="Verger D."/>
            <person name="Miller E."/>
            <person name="Remaut H."/>
            <person name="Waksman G."/>
            <person name="Hultgren S."/>
        </authorList>
    </citation>
    <scope>X-RAY CRYSTALLOGRAPHY (2.3 ANGSTROMS) OF 23-195</scope>
    <scope>DISULFIDE BOND</scope>
</reference>
<accession>P07111</accession>
<protein>
    <recommendedName>
        <fullName>PAP fimbrial minor pilin protein</fullName>
    </recommendedName>
</protein>
<proteinExistence type="evidence at protein level"/>
<gene>
    <name type="primary">papH</name>
</gene>